<dbReference type="EMBL" id="AE016877">
    <property type="protein sequence ID" value="AAP07234.1"/>
    <property type="molecule type" value="Genomic_DNA"/>
</dbReference>
<dbReference type="RefSeq" id="NP_830033.1">
    <property type="nucleotide sequence ID" value="NC_004722.1"/>
</dbReference>
<dbReference type="RefSeq" id="WP_001029884.1">
    <property type="nucleotide sequence ID" value="NZ_CP138336.1"/>
</dbReference>
<dbReference type="SMR" id="Q814C3"/>
<dbReference type="STRING" id="226900.BC_0154"/>
<dbReference type="GeneID" id="93010920"/>
<dbReference type="KEGG" id="bce:BC0154"/>
<dbReference type="PATRIC" id="fig|226900.8.peg.156"/>
<dbReference type="HOGENOM" id="CLU_151267_1_0_9"/>
<dbReference type="OrthoDB" id="9803250at2"/>
<dbReference type="PRO" id="PR:Q814C3"/>
<dbReference type="Proteomes" id="UP000001417">
    <property type="component" value="Chromosome"/>
</dbReference>
<dbReference type="GO" id="GO:0005829">
    <property type="term" value="C:cytosol"/>
    <property type="evidence" value="ECO:0000318"/>
    <property type="project" value="GO_Central"/>
</dbReference>
<dbReference type="GO" id="GO:0043022">
    <property type="term" value="F:ribosome binding"/>
    <property type="evidence" value="ECO:0000318"/>
    <property type="project" value="GO_Central"/>
</dbReference>
<dbReference type="GO" id="GO:0019843">
    <property type="term" value="F:rRNA binding"/>
    <property type="evidence" value="ECO:0007669"/>
    <property type="project" value="UniProtKB-UniRule"/>
</dbReference>
<dbReference type="GO" id="GO:0003743">
    <property type="term" value="F:translation initiation factor activity"/>
    <property type="evidence" value="ECO:0007669"/>
    <property type="project" value="UniProtKB-UniRule"/>
</dbReference>
<dbReference type="CDD" id="cd04451">
    <property type="entry name" value="S1_IF1"/>
    <property type="match status" value="1"/>
</dbReference>
<dbReference type="FunFam" id="2.40.50.140:FF:000002">
    <property type="entry name" value="Translation initiation factor IF-1"/>
    <property type="match status" value="1"/>
</dbReference>
<dbReference type="Gene3D" id="2.40.50.140">
    <property type="entry name" value="Nucleic acid-binding proteins"/>
    <property type="match status" value="1"/>
</dbReference>
<dbReference type="HAMAP" id="MF_00075">
    <property type="entry name" value="IF_1"/>
    <property type="match status" value="1"/>
</dbReference>
<dbReference type="InterPro" id="IPR012340">
    <property type="entry name" value="NA-bd_OB-fold"/>
</dbReference>
<dbReference type="InterPro" id="IPR006196">
    <property type="entry name" value="RNA-binding_domain_S1_IF1"/>
</dbReference>
<dbReference type="InterPro" id="IPR003029">
    <property type="entry name" value="S1_domain"/>
</dbReference>
<dbReference type="InterPro" id="IPR004368">
    <property type="entry name" value="TIF_IF1"/>
</dbReference>
<dbReference type="NCBIfam" id="TIGR00008">
    <property type="entry name" value="infA"/>
    <property type="match status" value="1"/>
</dbReference>
<dbReference type="PANTHER" id="PTHR33370">
    <property type="entry name" value="TRANSLATION INITIATION FACTOR IF-1, CHLOROPLASTIC"/>
    <property type="match status" value="1"/>
</dbReference>
<dbReference type="PANTHER" id="PTHR33370:SF1">
    <property type="entry name" value="TRANSLATION INITIATION FACTOR IF-1, CHLOROPLASTIC"/>
    <property type="match status" value="1"/>
</dbReference>
<dbReference type="Pfam" id="PF01176">
    <property type="entry name" value="eIF-1a"/>
    <property type="match status" value="1"/>
</dbReference>
<dbReference type="SMART" id="SM00316">
    <property type="entry name" value="S1"/>
    <property type="match status" value="1"/>
</dbReference>
<dbReference type="SUPFAM" id="SSF50249">
    <property type="entry name" value="Nucleic acid-binding proteins"/>
    <property type="match status" value="1"/>
</dbReference>
<dbReference type="PROSITE" id="PS50832">
    <property type="entry name" value="S1_IF1_TYPE"/>
    <property type="match status" value="1"/>
</dbReference>
<feature type="chain" id="PRO_0000095730" description="Translation initiation factor IF-1">
    <location>
        <begin position="1"/>
        <end position="72"/>
    </location>
</feature>
<feature type="domain" description="S1-like" evidence="1">
    <location>
        <begin position="1"/>
        <end position="72"/>
    </location>
</feature>
<feature type="modified residue" description="Phosphotyrosine" evidence="1">
    <location>
        <position position="60"/>
    </location>
</feature>
<comment type="function">
    <text evidence="1">One of the essential components for the initiation of protein synthesis. Stabilizes the binding of IF-2 and IF-3 on the 30S subunit to which N-formylmethionyl-tRNA(fMet) subsequently binds. Helps modulate mRNA selection, yielding the 30S pre-initiation complex (PIC). Upon addition of the 50S ribosomal subunit IF-1, IF-2 and IF-3 are released leaving the mature 70S translation initiation complex.</text>
</comment>
<comment type="subunit">
    <text evidence="1">Component of the 30S ribosomal translation pre-initiation complex which assembles on the 30S ribosome in the order IF-2 and IF-3, IF-1 and N-formylmethionyl-tRNA(fMet); mRNA recruitment can occur at any time during PIC assembly.</text>
</comment>
<comment type="subcellular location">
    <subcellularLocation>
        <location evidence="1">Cytoplasm</location>
    </subcellularLocation>
</comment>
<comment type="similarity">
    <text evidence="1">Belongs to the IF-1 family.</text>
</comment>
<sequence>MAKDDVIEVEGTVLETLPNAMFKVELENGHVVLAHVSGKIRMNFIRILPGDKVTVELSPYDLNRGRITYRFK</sequence>
<gene>
    <name evidence="1" type="primary">infA</name>
    <name type="ordered locus">BC_0154</name>
</gene>
<protein>
    <recommendedName>
        <fullName evidence="1">Translation initiation factor IF-1</fullName>
    </recommendedName>
</protein>
<proteinExistence type="inferred from homology"/>
<evidence type="ECO:0000255" key="1">
    <source>
        <dbReference type="HAMAP-Rule" id="MF_00075"/>
    </source>
</evidence>
<organism>
    <name type="scientific">Bacillus cereus (strain ATCC 14579 / DSM 31 / CCUG 7414 / JCM 2152 / NBRC 15305 / NCIMB 9373 / NCTC 2599 / NRRL B-3711)</name>
    <dbReference type="NCBI Taxonomy" id="226900"/>
    <lineage>
        <taxon>Bacteria</taxon>
        <taxon>Bacillati</taxon>
        <taxon>Bacillota</taxon>
        <taxon>Bacilli</taxon>
        <taxon>Bacillales</taxon>
        <taxon>Bacillaceae</taxon>
        <taxon>Bacillus</taxon>
        <taxon>Bacillus cereus group</taxon>
    </lineage>
</organism>
<keyword id="KW-0963">Cytoplasm</keyword>
<keyword id="KW-0396">Initiation factor</keyword>
<keyword id="KW-0597">Phosphoprotein</keyword>
<keyword id="KW-0648">Protein biosynthesis</keyword>
<keyword id="KW-1185">Reference proteome</keyword>
<keyword id="KW-0694">RNA-binding</keyword>
<keyword id="KW-0699">rRNA-binding</keyword>
<reference key="1">
    <citation type="journal article" date="2003" name="Nature">
        <title>Genome sequence of Bacillus cereus and comparative analysis with Bacillus anthracis.</title>
        <authorList>
            <person name="Ivanova N."/>
            <person name="Sorokin A."/>
            <person name="Anderson I."/>
            <person name="Galleron N."/>
            <person name="Candelon B."/>
            <person name="Kapatral V."/>
            <person name="Bhattacharyya A."/>
            <person name="Reznik G."/>
            <person name="Mikhailova N."/>
            <person name="Lapidus A."/>
            <person name="Chu L."/>
            <person name="Mazur M."/>
            <person name="Goltsman E."/>
            <person name="Larsen N."/>
            <person name="D'Souza M."/>
            <person name="Walunas T."/>
            <person name="Grechkin Y."/>
            <person name="Pusch G."/>
            <person name="Haselkorn R."/>
            <person name="Fonstein M."/>
            <person name="Ehrlich S.D."/>
            <person name="Overbeek R."/>
            <person name="Kyrpides N.C."/>
        </authorList>
    </citation>
    <scope>NUCLEOTIDE SEQUENCE [LARGE SCALE GENOMIC DNA]</scope>
    <source>
        <strain>ATCC 14579 / DSM 31 / CCUG 7414 / JCM 2152 / NBRC 15305 / NCIMB 9373 / NCTC 2599 / NRRL B-3711</strain>
    </source>
</reference>
<name>IF1_BACCR</name>
<accession>Q814C3</accession>